<dbReference type="EMBL" id="CP000753">
    <property type="protein sequence ID" value="ABS09185.1"/>
    <property type="molecule type" value="Genomic_DNA"/>
</dbReference>
<dbReference type="RefSeq" id="WP_006082532.1">
    <property type="nucleotide sequence ID" value="NC_009665.1"/>
</dbReference>
<dbReference type="SMR" id="A6WQU6"/>
<dbReference type="KEGG" id="sbm:Shew185_3054"/>
<dbReference type="HOGENOM" id="CLU_170994_0_0_6"/>
<dbReference type="GO" id="GO:0005829">
    <property type="term" value="C:cytosol"/>
    <property type="evidence" value="ECO:0007669"/>
    <property type="project" value="TreeGrafter"/>
</dbReference>
<dbReference type="GO" id="GO:0005506">
    <property type="term" value="F:iron ion binding"/>
    <property type="evidence" value="ECO:0007669"/>
    <property type="project" value="UniProtKB-UniRule"/>
</dbReference>
<dbReference type="GO" id="GO:0034599">
    <property type="term" value="P:cellular response to oxidative stress"/>
    <property type="evidence" value="ECO:0007669"/>
    <property type="project" value="TreeGrafter"/>
</dbReference>
<dbReference type="FunFam" id="1.10.3880.10:FF:000001">
    <property type="entry name" value="Probable Fe(2+)-trafficking protein"/>
    <property type="match status" value="1"/>
</dbReference>
<dbReference type="Gene3D" id="1.10.3880.10">
    <property type="entry name" value="Fe(II) trafficking protein YggX"/>
    <property type="match status" value="1"/>
</dbReference>
<dbReference type="HAMAP" id="MF_00686">
    <property type="entry name" value="Fe_traffic_YggX"/>
    <property type="match status" value="1"/>
</dbReference>
<dbReference type="InterPro" id="IPR007457">
    <property type="entry name" value="Fe_traffick_prot_YggX"/>
</dbReference>
<dbReference type="InterPro" id="IPR036766">
    <property type="entry name" value="Fe_traffick_prot_YggX_sf"/>
</dbReference>
<dbReference type="NCBIfam" id="NF003817">
    <property type="entry name" value="PRK05408.1"/>
    <property type="match status" value="1"/>
</dbReference>
<dbReference type="PANTHER" id="PTHR36965">
    <property type="entry name" value="FE(2+)-TRAFFICKING PROTEIN-RELATED"/>
    <property type="match status" value="1"/>
</dbReference>
<dbReference type="PANTHER" id="PTHR36965:SF1">
    <property type="entry name" value="FE(2+)-TRAFFICKING PROTEIN-RELATED"/>
    <property type="match status" value="1"/>
</dbReference>
<dbReference type="Pfam" id="PF04362">
    <property type="entry name" value="Iron_traffic"/>
    <property type="match status" value="1"/>
</dbReference>
<dbReference type="PIRSF" id="PIRSF029827">
    <property type="entry name" value="Fe_traffic_YggX"/>
    <property type="match status" value="1"/>
</dbReference>
<dbReference type="SUPFAM" id="SSF111148">
    <property type="entry name" value="YggX-like"/>
    <property type="match status" value="1"/>
</dbReference>
<evidence type="ECO:0000255" key="1">
    <source>
        <dbReference type="HAMAP-Rule" id="MF_00686"/>
    </source>
</evidence>
<accession>A6WQU6</accession>
<keyword id="KW-0408">Iron</keyword>
<gene>
    <name type="ordered locus">Shew185_3054</name>
</gene>
<feature type="chain" id="PRO_1000045062" description="Probable Fe(2+)-trafficking protein">
    <location>
        <begin position="1"/>
        <end position="92"/>
    </location>
</feature>
<reference key="1">
    <citation type="submission" date="2007-07" db="EMBL/GenBank/DDBJ databases">
        <title>Complete sequence of chromosome of Shewanella baltica OS185.</title>
        <authorList>
            <consortium name="US DOE Joint Genome Institute"/>
            <person name="Copeland A."/>
            <person name="Lucas S."/>
            <person name="Lapidus A."/>
            <person name="Barry K."/>
            <person name="Glavina del Rio T."/>
            <person name="Dalin E."/>
            <person name="Tice H."/>
            <person name="Pitluck S."/>
            <person name="Sims D."/>
            <person name="Brettin T."/>
            <person name="Bruce D."/>
            <person name="Detter J.C."/>
            <person name="Han C."/>
            <person name="Schmutz J."/>
            <person name="Larimer F."/>
            <person name="Land M."/>
            <person name="Hauser L."/>
            <person name="Kyrpides N."/>
            <person name="Mikhailova N."/>
            <person name="Brettar I."/>
            <person name="Rodrigues J."/>
            <person name="Konstantinidis K."/>
            <person name="Tiedje J."/>
            <person name="Richardson P."/>
        </authorList>
    </citation>
    <scope>NUCLEOTIDE SEQUENCE [LARGE SCALE GENOMIC DNA]</scope>
    <source>
        <strain>OS185</strain>
    </source>
</reference>
<sequence length="92" mass="10840">MARTVNCVYLNKEADGLDFQLYPGDLGKRIFDNISKEAWGLWQKKQTMLINEKKLNMMNVDDRKFLEEQMTSFLFEGKEVEIEGFVPEKDQD</sequence>
<proteinExistence type="inferred from homology"/>
<protein>
    <recommendedName>
        <fullName evidence="1">Probable Fe(2+)-trafficking protein</fullName>
    </recommendedName>
</protein>
<name>FETP_SHEB8</name>
<organism>
    <name type="scientific">Shewanella baltica (strain OS185)</name>
    <dbReference type="NCBI Taxonomy" id="402882"/>
    <lineage>
        <taxon>Bacteria</taxon>
        <taxon>Pseudomonadati</taxon>
        <taxon>Pseudomonadota</taxon>
        <taxon>Gammaproteobacteria</taxon>
        <taxon>Alteromonadales</taxon>
        <taxon>Shewanellaceae</taxon>
        <taxon>Shewanella</taxon>
    </lineage>
</organism>
<comment type="function">
    <text evidence="1">Could be a mediator in iron transactions between iron acquisition and iron-requiring processes, such as synthesis and/or repair of Fe-S clusters in biosynthetic enzymes.</text>
</comment>
<comment type="similarity">
    <text evidence="1">Belongs to the Fe(2+)-trafficking protein family.</text>
</comment>